<keyword id="KW-0326">Glycosidase</keyword>
<keyword id="KW-0378">Hydrolase</keyword>
<feature type="chain" id="PRO_0000461445" description="Mannosylglycerate hydrolase">
    <location>
        <begin position="1"/>
        <end position="415"/>
    </location>
</feature>
<feature type="active site" description="Proton donor" evidence="1">
    <location>
        <position position="160"/>
    </location>
</feature>
<feature type="active site" description="Proton acceptor" evidence="1">
    <location>
        <position position="388"/>
    </location>
</feature>
<feature type="binding site" evidence="1">
    <location>
        <position position="23"/>
    </location>
    <ligand>
        <name>substrate</name>
    </ligand>
</feature>
<feature type="binding site" evidence="1">
    <location>
        <begin position="27"/>
        <end position="30"/>
    </location>
    <ligand>
        <name>substrate</name>
    </ligand>
</feature>
<feature type="binding site" evidence="1">
    <location>
        <position position="76"/>
    </location>
    <ligand>
        <name>substrate</name>
    </ligand>
</feature>
<feature type="binding site" evidence="1">
    <location>
        <position position="98"/>
    </location>
    <ligand>
        <name>substrate</name>
    </ligand>
</feature>
<feature type="binding site" evidence="1">
    <location>
        <position position="158"/>
    </location>
    <ligand>
        <name>substrate</name>
    </ligand>
</feature>
<feature type="binding site" evidence="1">
    <location>
        <position position="193"/>
    </location>
    <ligand>
        <name>substrate</name>
    </ligand>
</feature>
<feature type="binding site" evidence="1">
    <location>
        <begin position="344"/>
        <end position="345"/>
    </location>
    <ligand>
        <name>substrate</name>
    </ligand>
</feature>
<sequence length="415" mass="48144">MKAVEVLQRNSRGAFTVPAHGLYPYQWLWDSAFIALGWTQVDWERAWQELLCLFDYGQGPDGMLPHIVFHEQSRDYFPGPDVWGREARAQPATSGITQPPVVATVVRYLYEKDPDRDRARSRARYLFPKLLAYHRWLYHARDPYRTGLVVIVHPWESGMDNSPAWDKPLSRVPVENLPPYERRDVKHVNPEERPRKEDYDRYLSLLYLFRRLEYDPRGIYRQSPFKVVDVGFNAILQRANRDLYALAVLLQEDPYEIEEWIVRGEVGLEALWDREAGFYFSWDLVAGEPIAVKTSAGFLPLFAGTPHQGRASLLAQEAERWGEKARYLLPSVDPTSPFFEPGRYWRGPVWINVNWMVAEGFRDYGFAALAARLKADALALMEREGFREYYDPLTGQGRGGEGFSWSAALALFWTR</sequence>
<reference key="1">
    <citation type="journal article" date="2004" name="Nat. Biotechnol.">
        <title>The genome sequence of the extreme thermophile Thermus thermophilus.</title>
        <authorList>
            <person name="Henne A."/>
            <person name="Brueggemann H."/>
            <person name="Raasch C."/>
            <person name="Wiezer A."/>
            <person name="Hartsch T."/>
            <person name="Liesegang H."/>
            <person name="Johann A."/>
            <person name="Lienard T."/>
            <person name="Gohl O."/>
            <person name="Martinez-Arias R."/>
            <person name="Jacobi C."/>
            <person name="Starkuviene V."/>
            <person name="Schlenczeck S."/>
            <person name="Dencker S."/>
            <person name="Huber R."/>
            <person name="Klenk H.-P."/>
            <person name="Kramer W."/>
            <person name="Merkl R."/>
            <person name="Gottschalk G."/>
            <person name="Fritz H.-J."/>
        </authorList>
    </citation>
    <scope>NUCLEOTIDE SEQUENCE [LARGE SCALE GENOMIC DNA]</scope>
    <source>
        <strain>ATCC BAA-163 / DSM 7039 / HB27</strain>
    </source>
</reference>
<reference key="2">
    <citation type="journal article" date="2013" name="Enzyme Microb. Technol.">
        <title>A new bacterial hydrolase specific for the compatible solutes alpha-D-mannopyranosyl-(1-&gt;2)-D-glycerate and alpha-D-glucopyranosyl-(1-&gt;2)-D-glycerate.</title>
        <authorList>
            <person name="Alarico S."/>
            <person name="Empadinhas N."/>
            <person name="da Costa M.S."/>
        </authorList>
    </citation>
    <scope>FUNCTION</scope>
    <scope>CATALYTIC ACTIVITY</scope>
    <scope>ACTIVITY REGULATION</scope>
    <scope>BIOPHYSICOCHEMICAL PROPERTIES</scope>
    <scope>SUBUNIT</scope>
    <source>
        <strain>ATCC BAA-163 / DSM 7039 / HB27</strain>
    </source>
</reference>
<gene>
    <name evidence="3" type="primary">mgh</name>
    <name evidence="6" type="ordered locus">TT_C0614</name>
</gene>
<dbReference type="EC" id="3.2.1.170" evidence="2"/>
<dbReference type="EMBL" id="AE017221">
    <property type="protein sequence ID" value="AAS80962.1"/>
    <property type="molecule type" value="Genomic_DNA"/>
</dbReference>
<dbReference type="RefSeq" id="WP_011173059.1">
    <property type="nucleotide sequence ID" value="NC_005835.1"/>
</dbReference>
<dbReference type="SMR" id="Q72K04"/>
<dbReference type="CAZy" id="GH63">
    <property type="family name" value="Glycoside Hydrolase Family 63"/>
</dbReference>
<dbReference type="KEGG" id="tth:TT_C0614"/>
<dbReference type="eggNOG" id="COG1626">
    <property type="taxonomic scope" value="Bacteria"/>
</dbReference>
<dbReference type="HOGENOM" id="CLU_015270_1_0_0"/>
<dbReference type="BRENDA" id="3.2.1.208">
    <property type="organism ID" value="2305"/>
</dbReference>
<dbReference type="Proteomes" id="UP000000592">
    <property type="component" value="Chromosome"/>
</dbReference>
<dbReference type="GO" id="GO:0004573">
    <property type="term" value="F:Glc3Man9GlcNAc2 oligosaccharide glucosidase activity"/>
    <property type="evidence" value="ECO:0007669"/>
    <property type="project" value="InterPro"/>
</dbReference>
<dbReference type="GO" id="GO:0009311">
    <property type="term" value="P:oligosaccharide metabolic process"/>
    <property type="evidence" value="ECO:0007669"/>
    <property type="project" value="InterPro"/>
</dbReference>
<dbReference type="GO" id="GO:0006487">
    <property type="term" value="P:protein N-linked glycosylation"/>
    <property type="evidence" value="ECO:0007669"/>
    <property type="project" value="TreeGrafter"/>
</dbReference>
<dbReference type="Gene3D" id="1.50.10.10">
    <property type="match status" value="1"/>
</dbReference>
<dbReference type="InterPro" id="IPR008928">
    <property type="entry name" value="6-hairpin_glycosidase_sf"/>
</dbReference>
<dbReference type="InterPro" id="IPR012341">
    <property type="entry name" value="6hp_glycosidase-like_sf"/>
</dbReference>
<dbReference type="InterPro" id="IPR004888">
    <property type="entry name" value="Glycoside_hydrolase_63"/>
</dbReference>
<dbReference type="InterPro" id="IPR054491">
    <property type="entry name" value="MGH1-like_GH"/>
</dbReference>
<dbReference type="PANTHER" id="PTHR10412">
    <property type="entry name" value="MANNOSYL-OLIGOSACCHARIDE GLUCOSIDASE"/>
    <property type="match status" value="1"/>
</dbReference>
<dbReference type="PANTHER" id="PTHR10412:SF11">
    <property type="entry name" value="MANNOSYL-OLIGOSACCHARIDE GLUCOSIDASE"/>
    <property type="match status" value="1"/>
</dbReference>
<dbReference type="Pfam" id="PF22422">
    <property type="entry name" value="MGH1-like_GH"/>
    <property type="match status" value="1"/>
</dbReference>
<dbReference type="SUPFAM" id="SSF48208">
    <property type="entry name" value="Six-hairpin glycosidases"/>
    <property type="match status" value="1"/>
</dbReference>
<evidence type="ECO:0000250" key="1">
    <source>
        <dbReference type="UniProtKB" id="K5BDL0"/>
    </source>
</evidence>
<evidence type="ECO:0000269" key="2">
    <source>
    </source>
</evidence>
<evidence type="ECO:0000303" key="3">
    <source>
    </source>
</evidence>
<evidence type="ECO:0000305" key="4"/>
<evidence type="ECO:0000305" key="5">
    <source>
    </source>
</evidence>
<evidence type="ECO:0000312" key="6">
    <source>
        <dbReference type="EMBL" id="AAS80962.1"/>
    </source>
</evidence>
<comment type="function">
    <text evidence="2">Hydrolase that catalyzes the hydrolysis of mannosylglycerate (MG), a solute produced in response to osmotic stress in thermophiles, into mannose and glycerate (PubMed:23273275). Can also hydrolyze glucosylglycerate (GG) to glucose and glycerate, with similar catalytic efficiency (PubMed:23273275). Is highly specific for MG and GG, and cannot use mannosylglyceramide (MGA), glucosylglycerol, mannosylglucosylglycerate (MGG), glucosylglucosylglycerate (GGG) or trehalose as substrates (PubMed:23273275).</text>
</comment>
<comment type="catalytic activity">
    <reaction evidence="2">
        <text>(2R)-2-O-(alpha-D-mannosyl)-glycerate + H2O = D-mannose + (R)-glycerate</text>
        <dbReference type="Rhea" id="RHEA:58456"/>
        <dbReference type="ChEBI" id="CHEBI:4208"/>
        <dbReference type="ChEBI" id="CHEBI:15377"/>
        <dbReference type="ChEBI" id="CHEBI:16659"/>
        <dbReference type="ChEBI" id="CHEBI:57541"/>
        <dbReference type="EC" id="3.2.1.170"/>
    </reaction>
    <physiologicalReaction direction="left-to-right" evidence="5">
        <dbReference type="Rhea" id="RHEA:58457"/>
    </physiologicalReaction>
</comment>
<comment type="catalytic activity">
    <reaction evidence="2">
        <text>(2R)-2-O-(alpha-D-glucopyranosyl)-glycerate + H2O = (R)-glycerate + D-glucose</text>
        <dbReference type="Rhea" id="RHEA:32059"/>
        <dbReference type="ChEBI" id="CHEBI:4167"/>
        <dbReference type="ChEBI" id="CHEBI:15377"/>
        <dbReference type="ChEBI" id="CHEBI:16659"/>
        <dbReference type="ChEBI" id="CHEBI:62510"/>
    </reaction>
</comment>
<comment type="activity regulation">
    <text evidence="2">Activity is not stimulated by divalent cations and not affected in the presence of EDTA.</text>
</comment>
<comment type="biophysicochemical properties">
    <kinetics>
        <KM evidence="2">2.62 mM for mannosylglycerate (at 70 degrees Celsius)</KM>
        <KM evidence="2">3.74 mM for glucosylglycerate (at 70 degrees Celsius)</KM>
        <Vmax evidence="2">30.54 umol/min/mg enzyme with mannosylglycerate as substrate (at 70 degrees Celsius)</Vmax>
        <Vmax evidence="2">36.32 umol/min/mg enzyme with glucosylglycerate as substrate (at 70 degrees Celsius)</Vmax>
    </kinetics>
    <temperatureDependence>
        <text evidence="2">Optimum temperature is 70 degrees Celsius (PubMed:23273275). Activity is undetectable below 30 degrees Celsius and above 100 degrees Celsius (PubMed:23273275).</text>
    </temperatureDependence>
</comment>
<comment type="subunit">
    <text evidence="2">Homotetramer in solution.</text>
</comment>
<comment type="similarity">
    <text evidence="4">Belongs to the glycosyl hydrolase 63 family.</text>
</comment>
<organism>
    <name type="scientific">Thermus thermophilus (strain ATCC BAA-163 / DSM 7039 / HB27)</name>
    <dbReference type="NCBI Taxonomy" id="262724"/>
    <lineage>
        <taxon>Bacteria</taxon>
        <taxon>Thermotogati</taxon>
        <taxon>Deinococcota</taxon>
        <taxon>Deinococci</taxon>
        <taxon>Thermales</taxon>
        <taxon>Thermaceae</taxon>
        <taxon>Thermus</taxon>
    </lineage>
</organism>
<name>MGH_THET2</name>
<protein>
    <recommendedName>
        <fullName evidence="3">Mannosylglycerate hydrolase</fullName>
        <shortName evidence="3">MG hydrolase</shortName>
        <shortName evidence="3">MgH</shortName>
        <ecNumber evidence="2">3.2.1.170</ecNumber>
    </recommendedName>
</protein>
<accession>Q72K04</accession>
<proteinExistence type="evidence at protein level"/>